<keyword id="KW-0002">3D-structure</keyword>
<keyword id="KW-1185">Reference proteome</keyword>
<keyword id="KW-0687">Ribonucleoprotein</keyword>
<keyword id="KW-0689">Ribosomal protein</keyword>
<protein>
    <recommendedName>
        <fullName evidence="1">Small ribosomal subunit protein uS2</fullName>
    </recommendedName>
    <alternativeName>
        <fullName>30S ribosomal protein S2</fullName>
    </alternativeName>
</protein>
<accession>O29132</accession>
<organism>
    <name type="scientific">Archaeoglobus fulgidus (strain ATCC 49558 / DSM 4304 / JCM 9628 / NBRC 100126 / VC-16)</name>
    <dbReference type="NCBI Taxonomy" id="224325"/>
    <lineage>
        <taxon>Archaea</taxon>
        <taxon>Methanobacteriati</taxon>
        <taxon>Methanobacteriota</taxon>
        <taxon>Archaeoglobi</taxon>
        <taxon>Archaeoglobales</taxon>
        <taxon>Archaeoglobaceae</taxon>
        <taxon>Archaeoglobus</taxon>
    </lineage>
</organism>
<sequence length="197" mass="22221">MMEKEYEYLVPPDDYLAAGVHIGTQIKTGDMKKFIFKVRQDGLYVLDIRKLDERIRVAAKFLSRYEPSKILLVAARQYAHKPVQMFSKVVGSDYIVGRFIPGTLTNPMLSEYREPEVVFVNDPAIDKQAVSEATAVGIPVVALCDSNNSSADVDLVIPTNNKGRRALAIVYWLLAREIAKIRGQDFTYSIEDFEAEL</sequence>
<comment type="similarity">
    <text evidence="1">Belongs to the universal ribosomal protein uS2 family.</text>
</comment>
<proteinExistence type="evidence at protein level"/>
<evidence type="ECO:0000305" key="1"/>
<evidence type="ECO:0007829" key="2">
    <source>
        <dbReference type="PDB" id="1VI6"/>
    </source>
</evidence>
<name>RS2_ARCFU</name>
<feature type="chain" id="PRO_0000134319" description="Small ribosomal subunit protein uS2">
    <location>
        <begin position="1"/>
        <end position="197"/>
    </location>
</feature>
<feature type="helix" evidence="2">
    <location>
        <begin position="12"/>
        <end position="18"/>
    </location>
</feature>
<feature type="turn" evidence="2">
    <location>
        <begin position="19"/>
        <end position="21"/>
    </location>
</feature>
<feature type="turn" evidence="2">
    <location>
        <begin position="29"/>
        <end position="31"/>
    </location>
</feature>
<feature type="helix" evidence="2">
    <location>
        <begin position="32"/>
        <end position="34"/>
    </location>
</feature>
<feature type="strand" evidence="2">
    <location>
        <begin position="35"/>
        <end position="38"/>
    </location>
</feature>
<feature type="strand" evidence="2">
    <location>
        <begin position="44"/>
        <end position="46"/>
    </location>
</feature>
<feature type="helix" evidence="2">
    <location>
        <begin position="48"/>
        <end position="62"/>
    </location>
</feature>
<feature type="helix" evidence="2">
    <location>
        <begin position="67"/>
        <end position="69"/>
    </location>
</feature>
<feature type="strand" evidence="2">
    <location>
        <begin position="70"/>
        <end position="74"/>
    </location>
</feature>
<feature type="helix" evidence="2">
    <location>
        <begin position="77"/>
        <end position="79"/>
    </location>
</feature>
<feature type="helix" evidence="2">
    <location>
        <begin position="80"/>
        <end position="90"/>
    </location>
</feature>
<feature type="strand" evidence="2">
    <location>
        <begin position="93"/>
        <end position="98"/>
    </location>
</feature>
<feature type="turn" evidence="2">
    <location>
        <begin position="101"/>
        <end position="105"/>
    </location>
</feature>
<feature type="strand" evidence="2">
    <location>
        <begin position="116"/>
        <end position="121"/>
    </location>
</feature>
<feature type="turn" evidence="2">
    <location>
        <begin position="123"/>
        <end position="126"/>
    </location>
</feature>
<feature type="helix" evidence="2">
    <location>
        <begin position="127"/>
        <end position="135"/>
    </location>
</feature>
<feature type="strand" evidence="2">
    <location>
        <begin position="140"/>
        <end position="144"/>
    </location>
</feature>
<feature type="strand" evidence="2">
    <location>
        <begin position="154"/>
        <end position="159"/>
    </location>
</feature>
<feature type="helix" evidence="2">
    <location>
        <begin position="164"/>
        <end position="182"/>
    </location>
</feature>
<feature type="helix" evidence="2">
    <location>
        <begin position="190"/>
        <end position="193"/>
    </location>
</feature>
<gene>
    <name type="primary">rps2</name>
    <name type="ordered locus">AF_1133</name>
</gene>
<reference key="1">
    <citation type="journal article" date="1997" name="Nature">
        <title>The complete genome sequence of the hyperthermophilic, sulphate-reducing archaeon Archaeoglobus fulgidus.</title>
        <authorList>
            <person name="Klenk H.-P."/>
            <person name="Clayton R.A."/>
            <person name="Tomb J.-F."/>
            <person name="White O."/>
            <person name="Nelson K.E."/>
            <person name="Ketchum K.A."/>
            <person name="Dodson R.J."/>
            <person name="Gwinn M.L."/>
            <person name="Hickey E.K."/>
            <person name="Peterson J.D."/>
            <person name="Richardson D.L."/>
            <person name="Kerlavage A.R."/>
            <person name="Graham D.E."/>
            <person name="Kyrpides N.C."/>
            <person name="Fleischmann R.D."/>
            <person name="Quackenbush J."/>
            <person name="Lee N.H."/>
            <person name="Sutton G.G."/>
            <person name="Gill S.R."/>
            <person name="Kirkness E.F."/>
            <person name="Dougherty B.A."/>
            <person name="McKenney K."/>
            <person name="Adams M.D."/>
            <person name="Loftus B.J."/>
            <person name="Peterson S.N."/>
            <person name="Reich C.I."/>
            <person name="McNeil L.K."/>
            <person name="Badger J.H."/>
            <person name="Glodek A."/>
            <person name="Zhou L."/>
            <person name="Overbeek R."/>
            <person name="Gocayne J.D."/>
            <person name="Weidman J.F."/>
            <person name="McDonald L.A."/>
            <person name="Utterback T.R."/>
            <person name="Cotton M.D."/>
            <person name="Spriggs T."/>
            <person name="Artiach P."/>
            <person name="Kaine B.P."/>
            <person name="Sykes S.M."/>
            <person name="Sadow P.W."/>
            <person name="D'Andrea K.P."/>
            <person name="Bowman C."/>
            <person name="Fujii C."/>
            <person name="Garland S.A."/>
            <person name="Mason T.M."/>
            <person name="Olsen G.J."/>
            <person name="Fraser C.M."/>
            <person name="Smith H.O."/>
            <person name="Woese C.R."/>
            <person name="Venter J.C."/>
        </authorList>
    </citation>
    <scope>NUCLEOTIDE SEQUENCE [LARGE SCALE GENOMIC DNA]</scope>
    <source>
        <strain>ATCC 49558 / DSM 4304 / JCM 9628 / NBRC 100126 / VC-16</strain>
    </source>
</reference>
<dbReference type="EMBL" id="AE000782">
    <property type="protein sequence ID" value="AAB90111.1"/>
    <property type="molecule type" value="Genomic_DNA"/>
</dbReference>
<dbReference type="PIR" id="D69391">
    <property type="entry name" value="D69391"/>
</dbReference>
<dbReference type="PDB" id="1VI5">
    <property type="method" value="X-ray"/>
    <property type="resolution" value="2.65 A"/>
    <property type="chains" value="A/B/C/D=3-197"/>
</dbReference>
<dbReference type="PDB" id="1VI6">
    <property type="method" value="X-ray"/>
    <property type="resolution" value="1.95 A"/>
    <property type="chains" value="A/B/C/D=3-197"/>
</dbReference>
<dbReference type="PDBsum" id="1VI5"/>
<dbReference type="PDBsum" id="1VI6"/>
<dbReference type="SMR" id="O29132"/>
<dbReference type="STRING" id="224325.AF_1133"/>
<dbReference type="PaxDb" id="224325-AF_1133"/>
<dbReference type="EnsemblBacteria" id="AAB90111">
    <property type="protein sequence ID" value="AAB90111"/>
    <property type="gene ID" value="AF_1133"/>
</dbReference>
<dbReference type="KEGG" id="afu:AF_1133"/>
<dbReference type="eggNOG" id="arCOG04245">
    <property type="taxonomic scope" value="Archaea"/>
</dbReference>
<dbReference type="HOGENOM" id="CLU_058171_3_0_2"/>
<dbReference type="OrthoDB" id="371797at2157"/>
<dbReference type="PhylomeDB" id="O29132"/>
<dbReference type="EvolutionaryTrace" id="O29132"/>
<dbReference type="Proteomes" id="UP000002199">
    <property type="component" value="Chromosome"/>
</dbReference>
<dbReference type="GO" id="GO:0015935">
    <property type="term" value="C:small ribosomal subunit"/>
    <property type="evidence" value="ECO:0007669"/>
    <property type="project" value="InterPro"/>
</dbReference>
<dbReference type="GO" id="GO:0003735">
    <property type="term" value="F:structural constituent of ribosome"/>
    <property type="evidence" value="ECO:0007669"/>
    <property type="project" value="InterPro"/>
</dbReference>
<dbReference type="GO" id="GO:0006412">
    <property type="term" value="P:translation"/>
    <property type="evidence" value="ECO:0007669"/>
    <property type="project" value="UniProtKB-UniRule"/>
</dbReference>
<dbReference type="CDD" id="cd01425">
    <property type="entry name" value="RPS2"/>
    <property type="match status" value="1"/>
</dbReference>
<dbReference type="FunFam" id="3.40.50.10490:FF:000030">
    <property type="entry name" value="30S ribosomal protein S2"/>
    <property type="match status" value="1"/>
</dbReference>
<dbReference type="Gene3D" id="3.40.50.10490">
    <property type="entry name" value="Glucose-6-phosphate isomerase like protein, domain 1"/>
    <property type="match status" value="1"/>
</dbReference>
<dbReference type="HAMAP" id="MF_00291_A">
    <property type="entry name" value="Ribosomal_uS2_A"/>
    <property type="match status" value="1"/>
</dbReference>
<dbReference type="HAMAP" id="MF_00291_B">
    <property type="entry name" value="Ribosomal_uS2_B"/>
    <property type="match status" value="1"/>
</dbReference>
<dbReference type="InterPro" id="IPR001865">
    <property type="entry name" value="Ribosomal_uS2"/>
</dbReference>
<dbReference type="InterPro" id="IPR023454">
    <property type="entry name" value="Ribosomal_uS2_arc"/>
</dbReference>
<dbReference type="InterPro" id="IPR005706">
    <property type="entry name" value="Ribosomal_uS2_bac/mit/plastid"/>
</dbReference>
<dbReference type="InterPro" id="IPR018130">
    <property type="entry name" value="Ribosomal_uS2_CS"/>
</dbReference>
<dbReference type="InterPro" id="IPR005707">
    <property type="entry name" value="Ribosomal_uS2_euk/arc"/>
</dbReference>
<dbReference type="InterPro" id="IPR023591">
    <property type="entry name" value="Ribosomal_uS2_flav_dom_sf"/>
</dbReference>
<dbReference type="NCBIfam" id="TIGR01012">
    <property type="entry name" value="uS2_euk_arch"/>
    <property type="match status" value="1"/>
</dbReference>
<dbReference type="PANTHER" id="PTHR11489">
    <property type="entry name" value="40S RIBOSOMAL PROTEIN SA"/>
    <property type="match status" value="1"/>
</dbReference>
<dbReference type="Pfam" id="PF00318">
    <property type="entry name" value="Ribosomal_S2"/>
    <property type="match status" value="2"/>
</dbReference>
<dbReference type="PRINTS" id="PR00395">
    <property type="entry name" value="RIBOSOMALS2"/>
</dbReference>
<dbReference type="SUPFAM" id="SSF52313">
    <property type="entry name" value="Ribosomal protein S2"/>
    <property type="match status" value="1"/>
</dbReference>
<dbReference type="PROSITE" id="PS00963">
    <property type="entry name" value="RIBOSOMAL_S2_2"/>
    <property type="match status" value="1"/>
</dbReference>